<comment type="function">
    <text evidence="1 4">Component of the protein complex eIF4F, which is involved in the recognition of the mRNA cap, ATP-dependent unwinding of 5'-terminal secondary structure and recruitment of mRNA to the ribosome (By similarity). Recognizes and binds the 7-methylguanosine-containing mRNA cap during an early step in the initiation of protein synthesis and facilitates ribosome binding by inducing the unwinding of the mRNAs secondary structures (By similarity). Key component of recessive resistance to potyviruses (e.g. soybean mosaic virus (SMV), bean common mosaic virus (BCMV) and watermelon mosaic virus (WMV), but not bean pod mottle virus (BPMV)) (PubMed:31860775).</text>
</comment>
<comment type="function">
    <text evidence="4">(Microbial infection) Susceptibility host factor required for viral infection by recruiting viral RNAs to the host ribosomal complex via an interaction with viral genome-linked protein (VPg).</text>
</comment>
<comment type="subunit">
    <text evidence="1">EIF4F is a multi-subunit complex, the composition of which varies with external and internal environmental conditions. It is composed of at least EIF4A, EIF4E and EIF4G. EIF4E is also known to interact with other partners. In higher plants two isoforms of EIF4F have been identified, named isoform EIF4F and isoform EIF(iso)4F. Isoform EIF4F has subunits p220 and p26, whereas isoform EIF(iso)4F has subunits p82 and p28.</text>
</comment>
<comment type="subunit">
    <text evidence="4">(Microbial infection) Interacts with potyvirus viral genome-linked protein (VPg) in the nucleus; this interaction is possible in susceptible hosts but is impaired in resistant plants (PubMed:31860775). Binds to soybean mosaic virus (SMV) VPg in the nucleus (PubMed:31860775). Interacts with SMV nuclear inclusion protein A (NIa-Pro) and nuclear inclusion protein B (NIb) in the cytoplasm (PubMed:31860775).</text>
</comment>
<comment type="subcellular location">
    <subcellularLocation>
        <location evidence="4">Nucleus</location>
    </subcellularLocation>
    <subcellularLocation>
        <location evidence="4">Cytoplasm</location>
    </subcellularLocation>
</comment>
<comment type="subcellular location">
    <subcellularLocation>
        <location evidence="4">Nucleus</location>
    </subcellularLocation>
    <subcellularLocation>
        <location evidence="4">Cytoplasm</location>
    </subcellularLocation>
    <text evidence="4">(Microbial infection) Binds to potyvirus viral genome-linked protein (VPg) in the nucleus and with potyvirus nuclear inclusion protein A (NIa-Pro) and nuclear inclusion protein B (NIb) in the cytoplasm.</text>
</comment>
<comment type="tissue specificity">
    <text evidence="4">Mostly expressed in roots, flowers, immature pods and mature seeds, and, to a lower extent, in stems and leaves.</text>
</comment>
<comment type="induction">
    <text evidence="4">(Microbial infection) Induced upon infection by soybean mosaic virus (SMV) in susceptible plants (e.g. cv. Tianlong 1) but not in resistant plants (e.g. cv. Kefeng 1).</text>
</comment>
<comment type="PTM">
    <text evidence="1">According to the redox status, the Cys-135-Cys-173 disulfide bridge may have a role in regulating protein function by affecting its ability to bind capped mRNA.</text>
</comment>
<comment type="disruption phenotype">
    <text evidence="4">(Microbial infection) Increased resistance to potyvirus such as soybean mosaic virus (SMV), bean common mosaic virus (BCMV) and watermelon mosaic virus (WMV), but susceptible to bean pod mottle virus (BPMV).</text>
</comment>
<comment type="similarity">
    <text evidence="6">Belongs to the eukaryotic initiation factor 4E family.</text>
</comment>
<evidence type="ECO:0000250" key="1">
    <source>
        <dbReference type="UniProtKB" id="P29557"/>
    </source>
</evidence>
<evidence type="ECO:0000250" key="2">
    <source>
        <dbReference type="UniProtKB" id="Q00LS8"/>
    </source>
</evidence>
<evidence type="ECO:0000256" key="3">
    <source>
        <dbReference type="SAM" id="MobiDB-lite"/>
    </source>
</evidence>
<evidence type="ECO:0000269" key="4">
    <source>
    </source>
</evidence>
<evidence type="ECO:0000303" key="5">
    <source>
    </source>
</evidence>
<evidence type="ECO:0000305" key="6"/>
<evidence type="ECO:0000312" key="7">
    <source>
        <dbReference type="EMBL" id="KRH21134.1"/>
    </source>
</evidence>
<name>IF4E1_SOYBN</name>
<dbReference type="EMBL" id="EU912426">
    <property type="protein sequence ID" value="ACM45958.1"/>
    <property type="molecule type" value="mRNA"/>
</dbReference>
<dbReference type="EMBL" id="MN369710">
    <property type="protein sequence ID" value="QIZ03080.1"/>
    <property type="molecule type" value="mRNA"/>
</dbReference>
<dbReference type="EMBL" id="MN369711">
    <property type="protein sequence ID" value="QIZ03081.1"/>
    <property type="molecule type" value="mRNA"/>
</dbReference>
<dbReference type="EMBL" id="MN369712">
    <property type="protein sequence ID" value="QIZ03082.1"/>
    <property type="molecule type" value="mRNA"/>
</dbReference>
<dbReference type="EMBL" id="MN369713">
    <property type="protein sequence ID" value="QIZ03083.1"/>
    <property type="molecule type" value="mRNA"/>
</dbReference>
<dbReference type="EMBL" id="MN369715">
    <property type="protein sequence ID" value="QIZ03085.1"/>
    <property type="molecule type" value="mRNA"/>
</dbReference>
<dbReference type="EMBL" id="CM000846">
    <property type="protein sequence ID" value="KRH21134.1"/>
    <property type="molecule type" value="Genomic_DNA"/>
</dbReference>
<dbReference type="RefSeq" id="NP_001237528.1">
    <property type="nucleotide sequence ID" value="NM_001250599.1"/>
</dbReference>
<dbReference type="SMR" id="C6ZJZ3"/>
<dbReference type="FunCoup" id="C6ZJZ3">
    <property type="interactions" value="5463"/>
</dbReference>
<dbReference type="STRING" id="3847.C6ZJZ3"/>
<dbReference type="PaxDb" id="3847-GLYMA13G29420.1"/>
<dbReference type="EnsemblPlants" id="KRH21134">
    <property type="protein sequence ID" value="KRH21134"/>
    <property type="gene ID" value="GLYMA_13G222400"/>
</dbReference>
<dbReference type="GeneID" id="100499636"/>
<dbReference type="Gramene" id="KRH21134">
    <property type="protein sequence ID" value="KRH21134"/>
    <property type="gene ID" value="GLYMA_13G222400"/>
</dbReference>
<dbReference type="KEGG" id="gmx:100499636"/>
<dbReference type="eggNOG" id="KOG1670">
    <property type="taxonomic scope" value="Eukaryota"/>
</dbReference>
<dbReference type="HOGENOM" id="CLU_043552_2_1_1"/>
<dbReference type="InParanoid" id="C6ZJZ3"/>
<dbReference type="OMA" id="VKPRICL"/>
<dbReference type="OrthoDB" id="590761at2759"/>
<dbReference type="Proteomes" id="UP000008827">
    <property type="component" value="Chromosome 13"/>
</dbReference>
<dbReference type="GO" id="GO:0005737">
    <property type="term" value="C:cytoplasm"/>
    <property type="evidence" value="ECO:0000314"/>
    <property type="project" value="UniProtKB"/>
</dbReference>
<dbReference type="GO" id="GO:0016281">
    <property type="term" value="C:eukaryotic translation initiation factor 4F complex"/>
    <property type="evidence" value="ECO:0000318"/>
    <property type="project" value="GO_Central"/>
</dbReference>
<dbReference type="GO" id="GO:0005634">
    <property type="term" value="C:nucleus"/>
    <property type="evidence" value="ECO:0000314"/>
    <property type="project" value="UniProtKB"/>
</dbReference>
<dbReference type="GO" id="GO:0000340">
    <property type="term" value="F:RNA 7-methylguanosine cap binding"/>
    <property type="evidence" value="ECO:0000318"/>
    <property type="project" value="GO_Central"/>
</dbReference>
<dbReference type="GO" id="GO:0003723">
    <property type="term" value="F:RNA binding"/>
    <property type="evidence" value="ECO:0000250"/>
    <property type="project" value="UniProtKB"/>
</dbReference>
<dbReference type="GO" id="GO:0003743">
    <property type="term" value="F:translation initiation factor activity"/>
    <property type="evidence" value="ECO:0000250"/>
    <property type="project" value="UniProtKB"/>
</dbReference>
<dbReference type="GO" id="GO:0051607">
    <property type="term" value="P:defense response to virus"/>
    <property type="evidence" value="ECO:0000315"/>
    <property type="project" value="UniProtKB"/>
</dbReference>
<dbReference type="GO" id="GO:0006417">
    <property type="term" value="P:regulation of translation"/>
    <property type="evidence" value="ECO:0007669"/>
    <property type="project" value="UniProtKB-KW"/>
</dbReference>
<dbReference type="GO" id="GO:0009615">
    <property type="term" value="P:response to virus"/>
    <property type="evidence" value="ECO:0000270"/>
    <property type="project" value="UniProtKB"/>
</dbReference>
<dbReference type="GO" id="GO:0006413">
    <property type="term" value="P:translational initiation"/>
    <property type="evidence" value="ECO:0000250"/>
    <property type="project" value="UniProtKB"/>
</dbReference>
<dbReference type="FunFam" id="3.30.760.10:FF:000003">
    <property type="entry name" value="Eukaryotic translation initiation factor 4E"/>
    <property type="match status" value="1"/>
</dbReference>
<dbReference type="Gene3D" id="3.30.760.10">
    <property type="entry name" value="RNA Cap, Translation Initiation Factor Eif4e"/>
    <property type="match status" value="1"/>
</dbReference>
<dbReference type="InterPro" id="IPR023398">
    <property type="entry name" value="TIF_eIF4e-like"/>
</dbReference>
<dbReference type="InterPro" id="IPR001040">
    <property type="entry name" value="TIF_eIF_4E"/>
</dbReference>
<dbReference type="InterPro" id="IPR019770">
    <property type="entry name" value="TIF_eIF_4E_CS"/>
</dbReference>
<dbReference type="PANTHER" id="PTHR11960">
    <property type="entry name" value="EUKARYOTIC TRANSLATION INITIATION FACTOR 4E RELATED"/>
    <property type="match status" value="1"/>
</dbReference>
<dbReference type="PANTHER" id="PTHR11960:SF8">
    <property type="entry name" value="EUKARYOTIC TRANSLATION INITIATION FACTOR 4E1-RELATED"/>
    <property type="match status" value="1"/>
</dbReference>
<dbReference type="Pfam" id="PF01652">
    <property type="entry name" value="IF4E"/>
    <property type="match status" value="1"/>
</dbReference>
<dbReference type="SUPFAM" id="SSF55418">
    <property type="entry name" value="eIF4e-like"/>
    <property type="match status" value="1"/>
</dbReference>
<dbReference type="PROSITE" id="PS00813">
    <property type="entry name" value="IF4E"/>
    <property type="match status" value="1"/>
</dbReference>
<reference key="1">
    <citation type="submission" date="2008-07" db="EMBL/GenBank/DDBJ databases">
        <title>Cloning and analysis of gene encoding eukaryotic translation initiation factor 4E, eIF4E.</title>
        <authorList>
            <person name="Li W."/>
            <person name="Zhang Y."/>
            <person name="Han Y."/>
        </authorList>
    </citation>
    <scope>NUCLEOTIDE SEQUENCE [MRNA]</scope>
    <source>
        <strain>cv. Williams</strain>
    </source>
</reference>
<reference key="2">
    <citation type="journal article" date="2020" name="Mol. Plant Pathol.">
        <title>Soybean RNA interference lines silenced for eIF4E show broad potyvirus resistance.</title>
        <authorList>
            <person name="Gao L."/>
            <person name="Luo J."/>
            <person name="Ding X."/>
            <person name="Wang T."/>
            <person name="Hu T."/>
            <person name="Song P."/>
            <person name="Zhai R."/>
            <person name="Zhang H."/>
            <person name="Zhang K."/>
            <person name="Li K."/>
            <person name="Zhi H."/>
        </authorList>
    </citation>
    <scope>NUCLEOTIDE SEQUENCE [MRNA]</scope>
    <scope>FUNCTION</scope>
    <scope>FUNCTION (MICROBIAL INFECTION)</scope>
    <scope>DISRUPTION PHENOTYPE (MICROBIAL INFECTION)</scope>
    <scope>VARIANTS ASN-170 AND LYS-180</scope>
    <scope>INTERACTION WITH VIRAL VPG; NIA-PRO AND NIB (MICROBIAL INFECTION)</scope>
    <scope>SUBCELLULAR LOCATION</scope>
    <scope>SUBCELLULAR LOCATION (MICROBIAL INFECTION)</scope>
    <scope>TISSUE SPECIFICITY</scope>
    <scope>INDUCTION BY POTYVIRUS (MICROBIAL INFECTION)</scope>
    <source>
        <strain>cv. Kefeng 1</strain>
        <strain>cv. Liao 04M05-3</strain>
        <strain>cv. Nannong 1138-2</strain>
        <strain>cv. Tianlong 1</strain>
        <strain>cv. Zhongzuo 06-06</strain>
        <strain>cv. Zhongzuo J8035</strain>
    </source>
</reference>
<reference key="3">
    <citation type="journal article" date="2010" name="Nature">
        <title>Genome sequence of the palaeopolyploid soybean.</title>
        <authorList>
            <person name="Schmutz J."/>
            <person name="Cannon S.B."/>
            <person name="Schlueter J."/>
            <person name="Ma J."/>
            <person name="Mitros T."/>
            <person name="Nelson W."/>
            <person name="Hyten D.L."/>
            <person name="Song Q."/>
            <person name="Thelen J.J."/>
            <person name="Cheng J."/>
            <person name="Xu D."/>
            <person name="Hellsten U."/>
            <person name="May G.D."/>
            <person name="Yu Y."/>
            <person name="Sakurai T."/>
            <person name="Umezawa T."/>
            <person name="Bhattacharyya M.K."/>
            <person name="Sandhu D."/>
            <person name="Valliyodan B."/>
            <person name="Lindquist E."/>
            <person name="Peto M."/>
            <person name="Grant D."/>
            <person name="Shu S."/>
            <person name="Goodstein D."/>
            <person name="Barry K."/>
            <person name="Futrell-Griggs M."/>
            <person name="Abernathy B."/>
            <person name="Du J."/>
            <person name="Tian Z."/>
            <person name="Zhu L."/>
            <person name="Gill N."/>
            <person name="Joshi T."/>
            <person name="Libault M."/>
            <person name="Sethuraman A."/>
            <person name="Zhang X.-C."/>
            <person name="Shinozaki K."/>
            <person name="Nguyen H.T."/>
            <person name="Wing R.A."/>
            <person name="Cregan P."/>
            <person name="Specht J."/>
            <person name="Grimwood J."/>
            <person name="Rokhsar D."/>
            <person name="Stacey G."/>
            <person name="Shoemaker R.C."/>
            <person name="Jackson S.A."/>
        </authorList>
    </citation>
    <scope>NUCLEOTIDE SEQUENCE [LARGE SCALE GENOMIC DNA]</scope>
    <source>
        <strain>cv. Williams 82</strain>
        <tissue>Callus</tissue>
    </source>
</reference>
<reference key="4">
    <citation type="journal article" date="2014" name="Infect. Genet. Evol.">
        <title>Evolution of plant eukaryotic initiation factor 4E (eIF4E) and potyvirus genome-linked protein (VPg): a game of mirrors impacting resistance spectrum and durability.</title>
        <authorList>
            <person name="Moury B."/>
            <person name="Charron C."/>
            <person name="Janzac B."/>
            <person name="Simon V."/>
            <person name="Gallois J.L."/>
            <person name="Palloix A."/>
            <person name="Caranta C."/>
        </authorList>
    </citation>
    <scope>GENE FAMILY</scope>
    <scope>REVIEW</scope>
</reference>
<feature type="chain" id="PRO_0000454064" description="Eukaryotic translation initiation factor 4E-1">
    <location>
        <begin position="1"/>
        <end position="237"/>
    </location>
</feature>
<feature type="region of interest" description="Disordered" evidence="3">
    <location>
        <begin position="1"/>
        <end position="61"/>
    </location>
</feature>
<feature type="region of interest" description="EIF4G-binding" evidence="2">
    <location>
        <begin position="62"/>
        <end position="65"/>
    </location>
</feature>
<feature type="region of interest" description="EIF4G-binding" evidence="2">
    <location>
        <begin position="72"/>
        <end position="108"/>
    </location>
</feature>
<feature type="region of interest" description="EIF4G-binding" evidence="2">
    <location>
        <begin position="156"/>
        <end position="165"/>
    </location>
</feature>
<feature type="compositionally biased region" description="Acidic residues" evidence="3">
    <location>
        <begin position="25"/>
        <end position="44"/>
    </location>
</feature>
<feature type="compositionally biased region" description="Low complexity" evidence="3">
    <location>
        <begin position="47"/>
        <end position="58"/>
    </location>
</feature>
<feature type="binding site" evidence="1">
    <location>
        <begin position="80"/>
        <end position="85"/>
    </location>
    <ligand>
        <name>mRNA</name>
        <dbReference type="ChEBI" id="CHEBI:33699"/>
    </ligand>
    <ligandPart>
        <name>N(7)-methylguanosine 5'-triphosphate group</name>
        <dbReference type="ChEBI" id="CHEBI:74429"/>
        <note>m7GTP residue in mRNA cap</note>
    </ligandPart>
</feature>
<feature type="binding site" evidence="1">
    <location>
        <position position="112"/>
    </location>
    <ligand>
        <name>mRNA</name>
        <dbReference type="ChEBI" id="CHEBI:33699"/>
    </ligand>
    <ligandPart>
        <name>N(7)-methylguanosine 5'-triphosphate group</name>
        <dbReference type="ChEBI" id="CHEBI:74429"/>
        <note>m7GTP residue in mRNA cap</note>
    </ligandPart>
</feature>
<feature type="binding site" evidence="1">
    <location>
        <begin position="130"/>
        <end position="131"/>
    </location>
    <ligand>
        <name>mRNA</name>
        <dbReference type="ChEBI" id="CHEBI:33699"/>
    </ligand>
    <ligandPart>
        <name>N(7)-methylguanosine 5'-triphosphate group</name>
        <dbReference type="ChEBI" id="CHEBI:74429"/>
        <note>m7GTP residue in mRNA cap</note>
    </ligandPart>
</feature>
<feature type="binding site" evidence="1">
    <location>
        <begin position="180"/>
        <end position="185"/>
    </location>
    <ligand>
        <name>mRNA</name>
        <dbReference type="ChEBI" id="CHEBI:33699"/>
    </ligand>
    <ligandPart>
        <name>N(7)-methylguanosine 5'-triphosphate group</name>
        <dbReference type="ChEBI" id="CHEBI:74429"/>
        <note>m7GTP residue in mRNA cap</note>
    </ligandPart>
</feature>
<feature type="binding site" evidence="2">
    <location>
        <begin position="225"/>
        <end position="229"/>
    </location>
    <ligand>
        <name>mRNA</name>
        <dbReference type="ChEBI" id="CHEBI:33699"/>
    </ligand>
    <ligandPart>
        <name>N(7)-methylguanosine 5'-triphosphate group</name>
        <dbReference type="ChEBI" id="CHEBI:74429"/>
        <note>m7GTP residue in mRNA cap</note>
    </ligandPart>
</feature>
<feature type="disulfide bond" evidence="1">
    <location>
        <begin position="135"/>
        <end position="173"/>
    </location>
</feature>
<feature type="sequence variant" description="In strain: Zhongzuo 06-06." evidence="4">
    <original>D</original>
    <variation>N</variation>
    <location>
        <position position="170"/>
    </location>
</feature>
<feature type="sequence variant" description="In strain: Liao 04M05-3 and Zhongzuo J8035." evidence="4">
    <original>R</original>
    <variation>K</variation>
    <location>
        <position position="180"/>
    </location>
</feature>
<gene>
    <name evidence="5" type="primary">eIF4E1</name>
    <name evidence="7" type="ORF">GLYMA_13G222400</name>
</gene>
<accession>C6ZJZ3</accession>
<accession>A0A6H1NPQ5</accession>
<accession>A0A6H1NPQ6</accession>
<keyword id="KW-0963">Cytoplasm</keyword>
<keyword id="KW-1015">Disulfide bond</keyword>
<keyword id="KW-0945">Host-virus interaction</keyword>
<keyword id="KW-0396">Initiation factor</keyword>
<keyword id="KW-0539">Nucleus</keyword>
<keyword id="KW-0611">Plant defense</keyword>
<keyword id="KW-0648">Protein biosynthesis</keyword>
<keyword id="KW-1185">Reference proteome</keyword>
<keyword id="KW-0694">RNA-binding</keyword>
<keyword id="KW-0810">Translation regulation</keyword>
<organism>
    <name type="scientific">Glycine max</name>
    <name type="common">Soybean</name>
    <name type="synonym">Glycine hispida</name>
    <dbReference type="NCBI Taxonomy" id="3847"/>
    <lineage>
        <taxon>Eukaryota</taxon>
        <taxon>Viridiplantae</taxon>
        <taxon>Streptophyta</taxon>
        <taxon>Embryophyta</taxon>
        <taxon>Tracheophyta</taxon>
        <taxon>Spermatophyta</taxon>
        <taxon>Magnoliopsida</taxon>
        <taxon>eudicotyledons</taxon>
        <taxon>Gunneridae</taxon>
        <taxon>Pentapetalae</taxon>
        <taxon>rosids</taxon>
        <taxon>fabids</taxon>
        <taxon>Fabales</taxon>
        <taxon>Fabaceae</taxon>
        <taxon>Papilionoideae</taxon>
        <taxon>50 kb inversion clade</taxon>
        <taxon>NPAAA clade</taxon>
        <taxon>indigoferoid/millettioid clade</taxon>
        <taxon>Phaseoleae</taxon>
        <taxon>Glycine</taxon>
        <taxon>Glycine subgen. Soja</taxon>
    </lineage>
</organism>
<protein>
    <recommendedName>
        <fullName evidence="5">Eukaryotic translation initiation factor 4E-1</fullName>
        <shortName evidence="5">eIF4E-1</shortName>
    </recommendedName>
    <alternativeName>
        <fullName evidence="6">eIF-4F 25 kDa subunit</fullName>
    </alternativeName>
    <alternativeName>
        <fullName evidence="6">eIF-4F p26 subunit</fullName>
    </alternativeName>
    <alternativeName>
        <fullName evidence="6">mRNA cap-binding protein</fullName>
    </alternativeName>
</protein>
<sequence>MVVEDTQKSVITEDQYPSRVVSDNNNDDDDDDLEEGEIPVDGEDSGATATTKPPAALARNPHPLENSWTFWFDNPSSKSKQAAWGSSIRPIYTFATVEEFWSIYNNIHHPSKLGLGADFHCFKHKIEPKWEDPICANGGKWTMTFPRGKSDTSWLYTLLAMIGEQFDHGDEICGAVVNVRSRQDKIAIWTKNASNEAAQVSIGKQWKEFLDYNDTIGFIFHEDAKKLDRGAKNKYVV</sequence>
<proteinExistence type="evidence at protein level"/>